<accession>Q6MJE9</accession>
<organism>
    <name type="scientific">Bdellovibrio bacteriovorus (strain ATCC 15356 / DSM 50701 / NCIMB 9529 / HD100)</name>
    <dbReference type="NCBI Taxonomy" id="264462"/>
    <lineage>
        <taxon>Bacteria</taxon>
        <taxon>Pseudomonadati</taxon>
        <taxon>Bdellovibrionota</taxon>
        <taxon>Bdellovibrionia</taxon>
        <taxon>Bdellovibrionales</taxon>
        <taxon>Pseudobdellovibrionaceae</taxon>
        <taxon>Bdellovibrio</taxon>
    </lineage>
</organism>
<proteinExistence type="inferred from homology"/>
<sequence>MLPVEHHVRIGQILIAENGEVLKTVLGSCVGIALVWRRQNKWALAHCLLPYPETFKEDKEARYVSQTIPRMLERMGATMADVSELEAIVAGGGRMMDGDKNYIKFVVGDENLKAAKAVLEKHRIRIVAFEPGGEQGTKMRIAGDGDYSIEKLPKTA</sequence>
<dbReference type="EC" id="3.5.1.44" evidence="1"/>
<dbReference type="EMBL" id="BX842653">
    <property type="protein sequence ID" value="CAE80611.1"/>
    <property type="molecule type" value="Genomic_DNA"/>
</dbReference>
<dbReference type="RefSeq" id="WP_011165214.1">
    <property type="nucleotide sequence ID" value="NC_005363.1"/>
</dbReference>
<dbReference type="SMR" id="Q6MJE9"/>
<dbReference type="STRING" id="264462.Bd2829"/>
<dbReference type="GeneID" id="93013706"/>
<dbReference type="KEGG" id="bba:Bd2829"/>
<dbReference type="eggNOG" id="COG1871">
    <property type="taxonomic scope" value="Bacteria"/>
</dbReference>
<dbReference type="HOGENOM" id="CLU_087854_2_0_7"/>
<dbReference type="Proteomes" id="UP000008080">
    <property type="component" value="Chromosome"/>
</dbReference>
<dbReference type="GO" id="GO:0050568">
    <property type="term" value="F:protein-glutamine glutaminase activity"/>
    <property type="evidence" value="ECO:0007669"/>
    <property type="project" value="UniProtKB-UniRule"/>
</dbReference>
<dbReference type="GO" id="GO:0006935">
    <property type="term" value="P:chemotaxis"/>
    <property type="evidence" value="ECO:0007669"/>
    <property type="project" value="UniProtKB-UniRule"/>
</dbReference>
<dbReference type="CDD" id="cd16352">
    <property type="entry name" value="CheD"/>
    <property type="match status" value="1"/>
</dbReference>
<dbReference type="Gene3D" id="3.30.1330.200">
    <property type="match status" value="1"/>
</dbReference>
<dbReference type="HAMAP" id="MF_01440">
    <property type="entry name" value="CheD"/>
    <property type="match status" value="1"/>
</dbReference>
<dbReference type="InterPro" id="IPR038592">
    <property type="entry name" value="CheD-like_sf"/>
</dbReference>
<dbReference type="InterPro" id="IPR005659">
    <property type="entry name" value="Chemorcpt_Glu_NH3ase_CheD"/>
</dbReference>
<dbReference type="InterPro" id="IPR011324">
    <property type="entry name" value="Cytotoxic_necrot_fac-like_cat"/>
</dbReference>
<dbReference type="PANTHER" id="PTHR35147">
    <property type="entry name" value="CHEMORECEPTOR GLUTAMINE DEAMIDASE CHED-RELATED"/>
    <property type="match status" value="1"/>
</dbReference>
<dbReference type="PANTHER" id="PTHR35147:SF1">
    <property type="entry name" value="CHEMORECEPTOR GLUTAMINE DEAMIDASE CHED-RELATED"/>
    <property type="match status" value="1"/>
</dbReference>
<dbReference type="Pfam" id="PF03975">
    <property type="entry name" value="CheD"/>
    <property type="match status" value="1"/>
</dbReference>
<dbReference type="SUPFAM" id="SSF64438">
    <property type="entry name" value="CNF1/YfiH-like putative cysteine hydrolases"/>
    <property type="match status" value="1"/>
</dbReference>
<reference key="1">
    <citation type="journal article" date="2004" name="Science">
        <title>A predator unmasked: life cycle of Bdellovibrio bacteriovorus from a genomic perspective.</title>
        <authorList>
            <person name="Rendulic S."/>
            <person name="Jagtap P."/>
            <person name="Rosinus A."/>
            <person name="Eppinger M."/>
            <person name="Baar C."/>
            <person name="Lanz C."/>
            <person name="Keller H."/>
            <person name="Lambert C."/>
            <person name="Evans K.J."/>
            <person name="Goesmann A."/>
            <person name="Meyer F."/>
            <person name="Sockett R.E."/>
            <person name="Schuster S.C."/>
        </authorList>
    </citation>
    <scope>NUCLEOTIDE SEQUENCE [LARGE SCALE GENOMIC DNA]</scope>
    <source>
        <strain>ATCC 15356 / DSM 50701 / NCIMB 9529 / HD100</strain>
    </source>
</reference>
<gene>
    <name evidence="1" type="primary">cheD</name>
    <name type="ordered locus">Bd2829</name>
</gene>
<feature type="chain" id="PRO_0000251005" description="Probable chemoreceptor glutamine deamidase CheD">
    <location>
        <begin position="1"/>
        <end position="156"/>
    </location>
</feature>
<evidence type="ECO:0000255" key="1">
    <source>
        <dbReference type="HAMAP-Rule" id="MF_01440"/>
    </source>
</evidence>
<name>CHED_BDEBA</name>
<keyword id="KW-0145">Chemotaxis</keyword>
<keyword id="KW-0378">Hydrolase</keyword>
<keyword id="KW-1185">Reference proteome</keyword>
<comment type="function">
    <text evidence="1">Probably deamidates glutamine residues to glutamate on methyl-accepting chemotaxis receptors (MCPs), playing an important role in chemotaxis.</text>
</comment>
<comment type="catalytic activity">
    <reaction evidence="1">
        <text>L-glutaminyl-[protein] + H2O = L-glutamyl-[protein] + NH4(+)</text>
        <dbReference type="Rhea" id="RHEA:16441"/>
        <dbReference type="Rhea" id="RHEA-COMP:10207"/>
        <dbReference type="Rhea" id="RHEA-COMP:10208"/>
        <dbReference type="ChEBI" id="CHEBI:15377"/>
        <dbReference type="ChEBI" id="CHEBI:28938"/>
        <dbReference type="ChEBI" id="CHEBI:29973"/>
        <dbReference type="ChEBI" id="CHEBI:30011"/>
        <dbReference type="EC" id="3.5.1.44"/>
    </reaction>
</comment>
<comment type="similarity">
    <text evidence="1">Belongs to the CheD family.</text>
</comment>
<protein>
    <recommendedName>
        <fullName evidence="1">Probable chemoreceptor glutamine deamidase CheD</fullName>
        <ecNumber evidence="1">3.5.1.44</ecNumber>
    </recommendedName>
</protein>